<proteinExistence type="evidence at protein level"/>
<name>THIK_YEAST</name>
<sequence length="417" mass="44730">MSQRLQSIKDHLVESAMGKGESKRKNSLLEKRPEDVVIVAANRSAIGKGFKGAFKDVNTDYLLYNFLNEFIGRFPEPLRADLNLIEEVACGNVLNVGAGATEHRAACLASGIPYSTPFVALNRQCSSGLTAVNDIANKIKVGQIDIGLALGVESMTNNYKNVNPLGMISSEELQKNREAKKCLIPMGITNENVAANFKISRKDQDEFAANSYQKAYKAKNEGLFEDEILPIKLPDGSICQSDEGPRPNVTAESLSSIRPAFIKDRGTTTAGNASQVSDGVAGVLLARRSVANQLNLPVLGRYIDFQTVGVPPEIMGVGPAYAIPKVLEATGLQVQDIDIFEINEAFAAQALYCIHKLGIDLNKVNPRGGAIALGHPLGCTGARQVATILRELKKDQIGVVSMCIGTGMGAAAIFIKE</sequence>
<gene>
    <name type="primary">POT1</name>
    <name type="synonym">FOX3</name>
    <name type="synonym">POX3</name>
    <name type="ordered locus">YIL160C</name>
</gene>
<evidence type="ECO:0000269" key="1">
    <source>
    </source>
</evidence>
<evidence type="ECO:0000269" key="2">
    <source>
    </source>
</evidence>
<evidence type="ECO:0000269" key="3">
    <source>
    </source>
</evidence>
<evidence type="ECO:0000269" key="4">
    <source>
    </source>
</evidence>
<evidence type="ECO:0000269" key="5">
    <source>
    </source>
</evidence>
<evidence type="ECO:0000269" key="6">
    <source>
    </source>
</evidence>
<evidence type="ECO:0000305" key="7"/>
<evidence type="ECO:0000305" key="8">
    <source>
    </source>
</evidence>
<evidence type="ECO:0000305" key="9">
    <source>
    </source>
</evidence>
<evidence type="ECO:0000305" key="10">
    <source>
    </source>
</evidence>
<evidence type="ECO:0007744" key="11">
    <source>
        <dbReference type="PDB" id="3W15"/>
    </source>
</evidence>
<evidence type="ECO:0007829" key="12">
    <source>
        <dbReference type="PDB" id="1AFW"/>
    </source>
</evidence>
<evidence type="ECO:0007829" key="13">
    <source>
        <dbReference type="PDB" id="3W15"/>
    </source>
</evidence>
<feature type="transit peptide" description="Peroxisome" evidence="8">
    <location>
        <begin position="1"/>
        <end position="15"/>
    </location>
</feature>
<feature type="chain" id="PRO_0000034078" description="3-ketoacyl-CoA thiolase, peroxisomal" evidence="8">
    <location>
        <begin position="16"/>
        <end position="417"/>
    </location>
</feature>
<feature type="region of interest" description="PTS2-type peroxisomal targeting signal" evidence="2">
    <location>
        <begin position="1"/>
        <end position="15"/>
    </location>
</feature>
<feature type="active site" description="Acyl-thioester intermediate">
    <location>
        <position position="125"/>
    </location>
</feature>
<feature type="active site" description="Proton acceptor">
    <location>
        <position position="375"/>
    </location>
</feature>
<feature type="active site" description="Proton acceptor">
    <location>
        <position position="403"/>
    </location>
</feature>
<feature type="helix" evidence="13">
    <location>
        <begin position="1"/>
        <end position="15"/>
    </location>
</feature>
<feature type="turn" evidence="12">
    <location>
        <begin position="26"/>
        <end position="29"/>
    </location>
</feature>
<feature type="strand" evidence="12">
    <location>
        <begin position="36"/>
        <end position="43"/>
    </location>
</feature>
<feature type="turn" evidence="12">
    <location>
        <begin position="49"/>
        <end position="51"/>
    </location>
</feature>
<feature type="turn" evidence="12">
    <location>
        <begin position="53"/>
        <end position="56"/>
    </location>
</feature>
<feature type="helix" evidence="12">
    <location>
        <begin position="59"/>
        <end position="72"/>
    </location>
</feature>
<feature type="helix" evidence="12">
    <location>
        <begin position="76"/>
        <end position="79"/>
    </location>
</feature>
<feature type="helix" evidence="12">
    <location>
        <begin position="82"/>
        <end position="84"/>
    </location>
</feature>
<feature type="strand" evidence="12">
    <location>
        <begin position="88"/>
        <end position="91"/>
    </location>
</feature>
<feature type="strand" evidence="12">
    <location>
        <begin position="93"/>
        <end position="96"/>
    </location>
</feature>
<feature type="helix" evidence="12">
    <location>
        <begin position="97"/>
        <end position="99"/>
    </location>
</feature>
<feature type="helix" evidence="12">
    <location>
        <begin position="100"/>
        <end position="109"/>
    </location>
</feature>
<feature type="strand" evidence="12">
    <location>
        <begin position="118"/>
        <end position="122"/>
    </location>
</feature>
<feature type="helix" evidence="12">
    <location>
        <begin position="124"/>
        <end position="126"/>
    </location>
</feature>
<feature type="helix" evidence="12">
    <location>
        <begin position="127"/>
        <end position="140"/>
    </location>
</feature>
<feature type="strand" evidence="12">
    <location>
        <begin position="145"/>
        <end position="154"/>
    </location>
</feature>
<feature type="helix" evidence="12">
    <location>
        <begin position="155"/>
        <end position="158"/>
    </location>
</feature>
<feature type="helix" evidence="12">
    <location>
        <begin position="159"/>
        <end position="161"/>
    </location>
</feature>
<feature type="helix" evidence="12">
    <location>
        <begin position="171"/>
        <end position="175"/>
    </location>
</feature>
<feature type="helix" evidence="12">
    <location>
        <begin position="179"/>
        <end position="183"/>
    </location>
</feature>
<feature type="helix" evidence="12">
    <location>
        <begin position="186"/>
        <end position="196"/>
    </location>
</feature>
<feature type="helix" evidence="12">
    <location>
        <begin position="201"/>
        <end position="220"/>
    </location>
</feature>
<feature type="turn" evidence="12">
    <location>
        <begin position="225"/>
        <end position="227"/>
    </location>
</feature>
<feature type="helix" evidence="12">
    <location>
        <begin position="251"/>
        <end position="255"/>
    </location>
</feature>
<feature type="turn" evidence="12">
    <location>
        <begin position="263"/>
        <end position="265"/>
    </location>
</feature>
<feature type="turn" evidence="12">
    <location>
        <begin position="270"/>
        <end position="272"/>
    </location>
</feature>
<feature type="strand" evidence="12">
    <location>
        <begin position="276"/>
        <end position="287"/>
    </location>
</feature>
<feature type="helix" evidence="12">
    <location>
        <begin position="288"/>
        <end position="293"/>
    </location>
</feature>
<feature type="strand" evidence="12">
    <location>
        <begin position="300"/>
        <end position="309"/>
    </location>
</feature>
<feature type="helix" evidence="12">
    <location>
        <begin position="312"/>
        <end position="317"/>
    </location>
</feature>
<feature type="helix" evidence="12">
    <location>
        <begin position="318"/>
        <end position="330"/>
    </location>
</feature>
<feature type="helix" evidence="12">
    <location>
        <begin position="334"/>
        <end position="336"/>
    </location>
</feature>
<feature type="strand" evidence="12">
    <location>
        <begin position="338"/>
        <end position="342"/>
    </location>
</feature>
<feature type="helix" evidence="12">
    <location>
        <begin position="347"/>
        <end position="357"/>
    </location>
</feature>
<feature type="helix" evidence="12">
    <location>
        <begin position="361"/>
        <end position="363"/>
    </location>
</feature>
<feature type="helix" evidence="12">
    <location>
        <begin position="370"/>
        <end position="373"/>
    </location>
</feature>
<feature type="turn" evidence="12">
    <location>
        <begin position="377"/>
        <end position="379"/>
    </location>
</feature>
<feature type="helix" evidence="12">
    <location>
        <begin position="380"/>
        <end position="391"/>
    </location>
</feature>
<feature type="strand" evidence="12">
    <location>
        <begin position="397"/>
        <end position="404"/>
    </location>
</feature>
<feature type="turn" evidence="12">
    <location>
        <begin position="405"/>
        <end position="407"/>
    </location>
</feature>
<feature type="strand" evidence="12">
    <location>
        <begin position="408"/>
        <end position="416"/>
    </location>
</feature>
<organism>
    <name type="scientific">Saccharomyces cerevisiae (strain ATCC 204508 / S288c)</name>
    <name type="common">Baker's yeast</name>
    <dbReference type="NCBI Taxonomy" id="559292"/>
    <lineage>
        <taxon>Eukaryota</taxon>
        <taxon>Fungi</taxon>
        <taxon>Dikarya</taxon>
        <taxon>Ascomycota</taxon>
        <taxon>Saccharomycotina</taxon>
        <taxon>Saccharomycetes</taxon>
        <taxon>Saccharomycetales</taxon>
        <taxon>Saccharomycetaceae</taxon>
        <taxon>Saccharomyces</taxon>
    </lineage>
</organism>
<dbReference type="EC" id="2.3.1.16"/>
<dbReference type="EMBL" id="Z38059">
    <property type="protein sequence ID" value="CAA86118.1"/>
    <property type="molecule type" value="Genomic_DNA"/>
</dbReference>
<dbReference type="EMBL" id="X53946">
    <property type="protein sequence ID" value="CAA37893.1"/>
    <property type="molecule type" value="Genomic_DNA"/>
</dbReference>
<dbReference type="EMBL" id="X53395">
    <property type="protein sequence ID" value="CAA37472.1"/>
    <property type="molecule type" value="Genomic_DNA"/>
</dbReference>
<dbReference type="EMBL" id="AY693184">
    <property type="protein sequence ID" value="AAT93203.1"/>
    <property type="molecule type" value="Genomic_DNA"/>
</dbReference>
<dbReference type="EMBL" id="BK006942">
    <property type="protein sequence ID" value="DAA08392.1"/>
    <property type="molecule type" value="Genomic_DNA"/>
</dbReference>
<dbReference type="PIR" id="S22784">
    <property type="entry name" value="S22784"/>
</dbReference>
<dbReference type="RefSeq" id="NP_012106.1">
    <property type="nucleotide sequence ID" value="NM_001179508.1"/>
</dbReference>
<dbReference type="PDB" id="1AFW">
    <property type="method" value="X-ray"/>
    <property type="resolution" value="1.80 A"/>
    <property type="chains" value="A/B=25-417"/>
</dbReference>
<dbReference type="PDB" id="1PXT">
    <property type="method" value="X-ray"/>
    <property type="resolution" value="2.80 A"/>
    <property type="chains" value="A/B=28-417"/>
</dbReference>
<dbReference type="PDB" id="3W15">
    <property type="method" value="X-ray"/>
    <property type="resolution" value="1.80 A"/>
    <property type="chains" value="C=1-15"/>
</dbReference>
<dbReference type="PDBsum" id="1AFW"/>
<dbReference type="PDBsum" id="1PXT"/>
<dbReference type="PDBsum" id="3W15"/>
<dbReference type="SMR" id="P27796"/>
<dbReference type="BioGRID" id="34832">
    <property type="interactions" value="279"/>
</dbReference>
<dbReference type="DIP" id="DIP-1504N"/>
<dbReference type="FunCoup" id="P27796">
    <property type="interactions" value="455"/>
</dbReference>
<dbReference type="IntAct" id="P27796">
    <property type="interactions" value="5"/>
</dbReference>
<dbReference type="MINT" id="P27796"/>
<dbReference type="STRING" id="4932.YIL160C"/>
<dbReference type="SwissLipids" id="SLP:000001408"/>
<dbReference type="PaxDb" id="4932-YIL160C"/>
<dbReference type="PeptideAtlas" id="P27796"/>
<dbReference type="EnsemblFungi" id="YIL160C_mRNA">
    <property type="protein sequence ID" value="YIL160C"/>
    <property type="gene ID" value="YIL160C"/>
</dbReference>
<dbReference type="GeneID" id="854646"/>
<dbReference type="KEGG" id="sce:YIL160C"/>
<dbReference type="AGR" id="SGD:S000001422"/>
<dbReference type="SGD" id="S000001422">
    <property type="gene designation" value="POT1"/>
</dbReference>
<dbReference type="VEuPathDB" id="FungiDB:YIL160C"/>
<dbReference type="eggNOG" id="KOG1389">
    <property type="taxonomic scope" value="Eukaryota"/>
</dbReference>
<dbReference type="GeneTree" id="ENSGT01030000234626"/>
<dbReference type="HOGENOM" id="CLU_031026_1_1_1"/>
<dbReference type="InParanoid" id="P27796"/>
<dbReference type="OMA" id="MTAFPEP"/>
<dbReference type="OrthoDB" id="5404651at2759"/>
<dbReference type="BioCyc" id="MetaCyc:YIL160C-MONOMER"/>
<dbReference type="BioCyc" id="YEAST:YIL160C-MONOMER"/>
<dbReference type="BRENDA" id="2.3.1.16">
    <property type="organism ID" value="984"/>
</dbReference>
<dbReference type="Reactome" id="R-SCE-2046106">
    <property type="pathway name" value="alpha-linolenic acid (ALA) metabolism"/>
</dbReference>
<dbReference type="Reactome" id="R-SCE-390247">
    <property type="pathway name" value="Beta-oxidation of very long chain fatty acids"/>
</dbReference>
<dbReference type="Reactome" id="R-SCE-6798695">
    <property type="pathway name" value="Neutrophil degranulation"/>
</dbReference>
<dbReference type="Reactome" id="R-SCE-9033241">
    <property type="pathway name" value="Peroxisomal protein import"/>
</dbReference>
<dbReference type="UniPathway" id="UPA00199"/>
<dbReference type="BioGRID-ORCS" id="854646">
    <property type="hits" value="2 hits in 10 CRISPR screens"/>
</dbReference>
<dbReference type="EvolutionaryTrace" id="P27796"/>
<dbReference type="PRO" id="PR:P27796"/>
<dbReference type="Proteomes" id="UP000002311">
    <property type="component" value="Chromosome IX"/>
</dbReference>
<dbReference type="RNAct" id="P27796">
    <property type="molecule type" value="protein"/>
</dbReference>
<dbReference type="GO" id="GO:0005758">
    <property type="term" value="C:mitochondrial intermembrane space"/>
    <property type="evidence" value="ECO:0000314"/>
    <property type="project" value="SGD"/>
</dbReference>
<dbReference type="GO" id="GO:0005782">
    <property type="term" value="C:peroxisomal matrix"/>
    <property type="evidence" value="ECO:0000314"/>
    <property type="project" value="SGD"/>
</dbReference>
<dbReference type="GO" id="GO:0005777">
    <property type="term" value="C:peroxisome"/>
    <property type="evidence" value="ECO:0000314"/>
    <property type="project" value="SGD"/>
</dbReference>
<dbReference type="GO" id="GO:0003988">
    <property type="term" value="F:acetyl-CoA C-acyltransferase activity"/>
    <property type="evidence" value="ECO:0000314"/>
    <property type="project" value="SGD"/>
</dbReference>
<dbReference type="GO" id="GO:0003729">
    <property type="term" value="F:mRNA binding"/>
    <property type="evidence" value="ECO:0000314"/>
    <property type="project" value="SGD"/>
</dbReference>
<dbReference type="GO" id="GO:0006635">
    <property type="term" value="P:fatty acid beta-oxidation"/>
    <property type="evidence" value="ECO:0000315"/>
    <property type="project" value="SGD"/>
</dbReference>
<dbReference type="GO" id="GO:0010124">
    <property type="term" value="P:phenylacetate catabolic process"/>
    <property type="evidence" value="ECO:0000318"/>
    <property type="project" value="GO_Central"/>
</dbReference>
<dbReference type="CDD" id="cd00751">
    <property type="entry name" value="thiolase"/>
    <property type="match status" value="1"/>
</dbReference>
<dbReference type="Gene3D" id="3.40.47.10">
    <property type="match status" value="2"/>
</dbReference>
<dbReference type="InterPro" id="IPR002155">
    <property type="entry name" value="Thiolase"/>
</dbReference>
<dbReference type="InterPro" id="IPR016039">
    <property type="entry name" value="Thiolase-like"/>
</dbReference>
<dbReference type="InterPro" id="IPR050215">
    <property type="entry name" value="Thiolase-like_sf_Thiolase"/>
</dbReference>
<dbReference type="InterPro" id="IPR020615">
    <property type="entry name" value="Thiolase_acyl_enz_int_AS"/>
</dbReference>
<dbReference type="InterPro" id="IPR020610">
    <property type="entry name" value="Thiolase_AS"/>
</dbReference>
<dbReference type="InterPro" id="IPR020617">
    <property type="entry name" value="Thiolase_C"/>
</dbReference>
<dbReference type="InterPro" id="IPR020613">
    <property type="entry name" value="Thiolase_CS"/>
</dbReference>
<dbReference type="InterPro" id="IPR020616">
    <property type="entry name" value="Thiolase_N"/>
</dbReference>
<dbReference type="NCBIfam" id="TIGR01930">
    <property type="entry name" value="AcCoA-C-Actrans"/>
    <property type="match status" value="1"/>
</dbReference>
<dbReference type="PANTHER" id="PTHR43853">
    <property type="entry name" value="3-KETOACYL-COA THIOLASE, PEROXISOMAL"/>
    <property type="match status" value="1"/>
</dbReference>
<dbReference type="PANTHER" id="PTHR43853:SF8">
    <property type="entry name" value="3-KETOACYL-COA THIOLASE, PEROXISOMAL"/>
    <property type="match status" value="1"/>
</dbReference>
<dbReference type="Pfam" id="PF02803">
    <property type="entry name" value="Thiolase_C"/>
    <property type="match status" value="1"/>
</dbReference>
<dbReference type="Pfam" id="PF00108">
    <property type="entry name" value="Thiolase_N"/>
    <property type="match status" value="1"/>
</dbReference>
<dbReference type="PIRSF" id="PIRSF000429">
    <property type="entry name" value="Ac-CoA_Ac_transf"/>
    <property type="match status" value="1"/>
</dbReference>
<dbReference type="SUPFAM" id="SSF53901">
    <property type="entry name" value="Thiolase-like"/>
    <property type="match status" value="2"/>
</dbReference>
<dbReference type="PROSITE" id="PS00098">
    <property type="entry name" value="THIOLASE_1"/>
    <property type="match status" value="1"/>
</dbReference>
<dbReference type="PROSITE" id="PS00737">
    <property type="entry name" value="THIOLASE_2"/>
    <property type="match status" value="1"/>
</dbReference>
<dbReference type="PROSITE" id="PS00099">
    <property type="entry name" value="THIOLASE_3"/>
    <property type="match status" value="1"/>
</dbReference>
<protein>
    <recommendedName>
        <fullName>3-ketoacyl-CoA thiolase, peroxisomal</fullName>
        <ecNumber>2.3.1.16</ecNumber>
    </recommendedName>
    <alternativeName>
        <fullName>Acetyl-CoA acyltransferase</fullName>
    </alternativeName>
    <alternativeName>
        <fullName>Beta-ketothiolase</fullName>
    </alternativeName>
    <alternativeName>
        <fullName>Peroxisomal 3-oxoacyl-CoA thiolase</fullName>
    </alternativeName>
</protein>
<keyword id="KW-0002">3D-structure</keyword>
<keyword id="KW-0012">Acyltransferase</keyword>
<keyword id="KW-0276">Fatty acid metabolism</keyword>
<keyword id="KW-0443">Lipid metabolism</keyword>
<keyword id="KW-0496">Mitochondrion</keyword>
<keyword id="KW-0576">Peroxisome</keyword>
<keyword id="KW-1185">Reference proteome</keyword>
<keyword id="KW-0808">Transferase</keyword>
<keyword id="KW-0809">Transit peptide</keyword>
<accession>P27796</accession>
<accession>D6VVC6</accession>
<comment type="function">
    <text evidence="9">Responsible for the thiolytic cleavage of straight chain 3-keto fatty acyl-CoAs (3-oxoacyl-CoAs).</text>
</comment>
<comment type="catalytic activity">
    <reaction evidence="9">
        <text>an acyl-CoA + acetyl-CoA = a 3-oxoacyl-CoA + CoA</text>
        <dbReference type="Rhea" id="RHEA:21564"/>
        <dbReference type="ChEBI" id="CHEBI:57287"/>
        <dbReference type="ChEBI" id="CHEBI:57288"/>
        <dbReference type="ChEBI" id="CHEBI:58342"/>
        <dbReference type="ChEBI" id="CHEBI:90726"/>
        <dbReference type="EC" id="2.3.1.16"/>
    </reaction>
</comment>
<comment type="pathway">
    <text evidence="9">Lipid metabolism; fatty acid metabolism.</text>
</comment>
<comment type="subunit">
    <text evidence="2 4 6">Homodimer (PubMed:7812714, PubMed:9402066). Interacts (via PTS2-type peroxisomal targeting signal region) with PEX7; leading to its translocation into peroxisomes (PubMed:23812376).</text>
</comment>
<comment type="interaction">
    <interactant intactId="EBI-19236">
        <id>P27796</id>
    </interactant>
    <interactant intactId="EBI-23549">
        <id>P50091</id>
        <label>PEX21</label>
    </interactant>
    <organismsDiffer>false</organismsDiffer>
    <experiments>5</experiments>
</comment>
<comment type="interaction">
    <interactant intactId="EBI-19236">
        <id>P27796</id>
    </interactant>
    <interactant intactId="EBI-13183">
        <id>P39108</id>
        <label>PEX7</label>
    </interactant>
    <organismsDiffer>false</organismsDiffer>
    <experiments>5</experiments>
</comment>
<comment type="subcellular location">
    <subcellularLocation>
        <location evidence="3 5">Peroxisome</location>
    </subcellularLocation>
    <subcellularLocation>
        <location evidence="1">Mitochondrion intermembrane space</location>
    </subcellularLocation>
</comment>
<comment type="domain">
    <text evidence="8 10">The PTS2-type peroxisomal targeting signal, which mediates interaction with PEX7 and localization to peroxisomes, is cleaved following import into peroxisomes.</text>
</comment>
<comment type="similarity">
    <text evidence="7">Belongs to the thiolase-like superfamily. Thiolase family.</text>
</comment>
<reference key="1">
    <citation type="journal article" date="1991" name="Eur. J. Biochem.">
        <title>Regulation of transcription of the gene coding for peroxisomal 3-oxoacyl-CoA thiolase of Saccharomyces cerevisiae.</title>
        <authorList>
            <person name="Einerhand A.W.C."/>
            <person name="Voorn-Brouwer M.M."/>
            <person name="Erdmann R."/>
            <person name="Kunau W.H."/>
            <person name="Tabak H.F."/>
        </authorList>
    </citation>
    <scope>NUCLEOTIDE SEQUENCE [GENOMIC DNA]</scope>
    <source>
        <strain>BJ1991</strain>
    </source>
</reference>
<reference key="2">
    <citation type="journal article" date="1991" name="Yeast">
        <title>A new glucose-repressible gene identified from the analysis of chromatin structure in deletion mutants of yeast SUC2 locus.</title>
        <authorList>
            <person name="Igual J.C."/>
            <person name="Matallana E."/>
            <person name="Gonzalez-Bosch C."/>
            <person name="Franco L."/>
            <person name="Perez-Ortin J.E."/>
        </authorList>
    </citation>
    <scope>NUCLEOTIDE SEQUENCE [GENOMIC DNA]</scope>
    <source>
        <strain>ATCC 204508 / S288c</strain>
    </source>
</reference>
<reference key="3">
    <citation type="journal article" date="1997" name="Nature">
        <title>The nucleotide sequence of Saccharomyces cerevisiae chromosome IX.</title>
        <authorList>
            <person name="Churcher C.M."/>
            <person name="Bowman S."/>
            <person name="Badcock K."/>
            <person name="Bankier A.T."/>
            <person name="Brown D."/>
            <person name="Chillingworth T."/>
            <person name="Connor R."/>
            <person name="Devlin K."/>
            <person name="Gentles S."/>
            <person name="Hamlin N."/>
            <person name="Harris D.E."/>
            <person name="Horsnell T."/>
            <person name="Hunt S."/>
            <person name="Jagels K."/>
            <person name="Jones M."/>
            <person name="Lye G."/>
            <person name="Moule S."/>
            <person name="Odell C."/>
            <person name="Pearson D."/>
            <person name="Rajandream M.A."/>
            <person name="Rice P."/>
            <person name="Rowley N."/>
            <person name="Skelton J."/>
            <person name="Smith V."/>
            <person name="Walsh S.V."/>
            <person name="Whitehead S."/>
            <person name="Barrell B.G."/>
        </authorList>
    </citation>
    <scope>NUCLEOTIDE SEQUENCE [LARGE SCALE GENOMIC DNA]</scope>
    <source>
        <strain>ATCC 204508 / S288c</strain>
    </source>
</reference>
<reference key="4">
    <citation type="journal article" date="2014" name="G3 (Bethesda)">
        <title>The reference genome sequence of Saccharomyces cerevisiae: Then and now.</title>
        <authorList>
            <person name="Engel S.R."/>
            <person name="Dietrich F.S."/>
            <person name="Fisk D.G."/>
            <person name="Binkley G."/>
            <person name="Balakrishnan R."/>
            <person name="Costanzo M.C."/>
            <person name="Dwight S.S."/>
            <person name="Hitz B.C."/>
            <person name="Karra K."/>
            <person name="Nash R.S."/>
            <person name="Weng S."/>
            <person name="Wong E.D."/>
            <person name="Lloyd P."/>
            <person name="Skrzypek M.S."/>
            <person name="Miyasato S.R."/>
            <person name="Simison M."/>
            <person name="Cherry J.M."/>
        </authorList>
    </citation>
    <scope>GENOME REANNOTATION</scope>
    <source>
        <strain>ATCC 204508 / S288c</strain>
    </source>
</reference>
<reference key="5">
    <citation type="journal article" date="2007" name="Genome Res.">
        <title>Approaching a complete repository of sequence-verified protein-encoding clones for Saccharomyces cerevisiae.</title>
        <authorList>
            <person name="Hu Y."/>
            <person name="Rolfs A."/>
            <person name="Bhullar B."/>
            <person name="Murthy T.V.S."/>
            <person name="Zhu C."/>
            <person name="Berger M.F."/>
            <person name="Camargo A.A."/>
            <person name="Kelley F."/>
            <person name="McCarron S."/>
            <person name="Jepson D."/>
            <person name="Richardson A."/>
            <person name="Raphael J."/>
            <person name="Moreira D."/>
            <person name="Taycher E."/>
            <person name="Zuo D."/>
            <person name="Mohr S."/>
            <person name="Kane M.F."/>
            <person name="Williamson J."/>
            <person name="Simpson A.J.G."/>
            <person name="Bulyk M.L."/>
            <person name="Harlow E."/>
            <person name="Marsischky G."/>
            <person name="Kolodner R.D."/>
            <person name="LaBaer J."/>
        </authorList>
    </citation>
    <scope>NUCLEOTIDE SEQUENCE [GENOMIC DNA]</scope>
    <source>
        <strain>ATCC 204508 / S288c</strain>
    </source>
</reference>
<reference key="6">
    <citation type="journal article" date="1994" name="J. Biol. Chem.">
        <title>Mutagenesis of the amino targeting signal of Saccharomyces cerevisiae 3-ketoacyl-CoA thiolase reveals conserved amino acids required for import into peroxisomes in vivo.</title>
        <authorList>
            <person name="Glover J.R."/>
            <person name="Andrews D.W."/>
            <person name="Subramani S."/>
            <person name="Rachubinski R.A."/>
        </authorList>
    </citation>
    <scope>MUTAGENESIS OF N-TERMINAL PTS REGION</scope>
    <scope>SUBCELLULAR LOCATION</scope>
    <scope>DOMAIN</scope>
</reference>
<reference key="7">
    <citation type="journal article" date="1994" name="Yeast">
        <title>Purification and immunolocalization of the peroxisomal 3-oxoacyl-CoA thiolase from Saccharomyces cerevisiae.</title>
        <authorList>
            <person name="Erdmann R."/>
            <person name="Kunau W.H."/>
        </authorList>
    </citation>
    <scope>FUNCTION</scope>
    <scope>CATALYTIC ACTIVITY</scope>
    <scope>PATHWAY</scope>
    <scope>SUBCELLULAR LOCATION</scope>
</reference>
<reference key="8">
    <citation type="journal article" date="2012" name="Mol. Cell. Proteomics">
        <title>Intermembrane space proteome of yeast mitochondria.</title>
        <authorList>
            <person name="Voegtle F.N."/>
            <person name="Burkhart J.M."/>
            <person name="Rao S."/>
            <person name="Gerbeth C."/>
            <person name="Hinrichs J."/>
            <person name="Martinou J.C."/>
            <person name="Chacinska A."/>
            <person name="Sickmann A."/>
            <person name="Zahedi R.P."/>
            <person name="Meisinger C."/>
        </authorList>
    </citation>
    <scope>IDENTIFICATION BY MASS SPECTROMETRY</scope>
    <scope>SUBCELLULAR LOCATION [LARGE SCALE ANALYSIS]</scope>
</reference>
<reference key="9">
    <citation type="journal article" date="1994" name="Structure">
        <title>The 2.8 A crystal structure of peroxisomal 3-ketoacyl-CoA thiolase of Saccharomyces cerevisiae: a five-layered alpha beta alpha beta alpha structure constructed from two core domains of identical topology.</title>
        <authorList>
            <person name="Mathieu M."/>
            <person name="Zeelen J.P."/>
            <person name="Pauptit R.A."/>
            <person name="Erdmann R."/>
            <person name="Kunau W.-H."/>
            <person name="Wierenga R.K."/>
        </authorList>
    </citation>
    <scope>X-RAY CRYSTALLOGRAPHY (2.8 ANGSTROMS)</scope>
    <scope>SUBUNIT</scope>
</reference>
<reference key="10">
    <citation type="journal article" date="1997" name="J. Mol. Biol.">
        <title>The 1.8 A crystal structure of the dimeric peroxisomal 3-ketoacyl-CoA thiolase of Saccharomyces cerevisiae: implications for substrate binding and reaction mechanism.</title>
        <authorList>
            <person name="Mathieu M."/>
            <person name="Modis Y."/>
            <person name="Zeelen J.P."/>
            <person name="Engel C.K."/>
            <person name="Abagyan R.A."/>
            <person name="Ahlberg A."/>
            <person name="Rasmussen B."/>
            <person name="Lamzin V.S."/>
            <person name="Kunau W.H."/>
            <person name="Wierenga R.K."/>
        </authorList>
    </citation>
    <scope>X-RAY CRYSTALLOGRAPHY (1.8 ANGSTROMS)</scope>
    <scope>SUBUNIT</scope>
</reference>
<reference evidence="11" key="11">
    <citation type="journal article" date="2013" name="Nat. Struct. Mol. Biol.">
        <title>Crystal structure of peroxisomal targeting signal-2 bound to its receptor complex Pex7p-Pex21p.</title>
        <authorList>
            <person name="Pan D."/>
            <person name="Nakatsu T."/>
            <person name="Kato H."/>
        </authorList>
    </citation>
    <scope>X-RAY CRYSTALLOGRAPHY (1.80 ANGSTROMS) OF 1-15 IN COMPLEX WITH PEX7 AND PEX21</scope>
</reference>